<protein>
    <recommendedName>
        <fullName evidence="1">Deoxyribose-phosphate aldolase</fullName>
        <shortName evidence="1">DERA</shortName>
        <ecNumber evidence="1">4.1.2.4</ecNumber>
    </recommendedName>
    <alternativeName>
        <fullName evidence="1">2-deoxy-D-ribose 5-phosphate aldolase</fullName>
    </alternativeName>
    <alternativeName>
        <fullName evidence="1">Phosphodeoxyriboaldolase</fullName>
        <shortName evidence="1">Deoxyriboaldolase</shortName>
    </alternativeName>
</protein>
<organism>
    <name type="scientific">Streptococcus pyogenes serotype M3 (strain ATCC BAA-595 / MGAS315)</name>
    <dbReference type="NCBI Taxonomy" id="198466"/>
    <lineage>
        <taxon>Bacteria</taxon>
        <taxon>Bacillati</taxon>
        <taxon>Bacillota</taxon>
        <taxon>Bacilli</taxon>
        <taxon>Lactobacillales</taxon>
        <taxon>Streptococcaceae</taxon>
        <taxon>Streptococcus</taxon>
    </lineage>
</organism>
<name>DEOC_STRP3</name>
<reference key="1">
    <citation type="journal article" date="2002" name="Proc. Natl. Acad. Sci. U.S.A.">
        <title>Genome sequence of a serotype M3 strain of group A Streptococcus: phage-encoded toxins, the high-virulence phenotype, and clone emergence.</title>
        <authorList>
            <person name="Beres S.B."/>
            <person name="Sylva G.L."/>
            <person name="Barbian K.D."/>
            <person name="Lei B."/>
            <person name="Hoff J.S."/>
            <person name="Mammarella N.D."/>
            <person name="Liu M.-Y."/>
            <person name="Smoot J.C."/>
            <person name="Porcella S.F."/>
            <person name="Parkins L.D."/>
            <person name="Campbell D.S."/>
            <person name="Smith T.M."/>
            <person name="McCormick J.K."/>
            <person name="Leung D.Y.M."/>
            <person name="Schlievert P.M."/>
            <person name="Musser J.M."/>
        </authorList>
    </citation>
    <scope>NUCLEOTIDE SEQUENCE [LARGE SCALE GENOMIC DNA]</scope>
    <source>
        <strain>ATCC BAA-595 / MGAS315</strain>
    </source>
</reference>
<evidence type="ECO:0000255" key="1">
    <source>
        <dbReference type="HAMAP-Rule" id="MF_00114"/>
    </source>
</evidence>
<comment type="function">
    <text evidence="1">Catalyzes a reversible aldol reaction between acetaldehyde and D-glyceraldehyde 3-phosphate to generate 2-deoxy-D-ribose 5-phosphate.</text>
</comment>
<comment type="catalytic activity">
    <reaction evidence="1">
        <text>2-deoxy-D-ribose 5-phosphate = D-glyceraldehyde 3-phosphate + acetaldehyde</text>
        <dbReference type="Rhea" id="RHEA:12821"/>
        <dbReference type="ChEBI" id="CHEBI:15343"/>
        <dbReference type="ChEBI" id="CHEBI:59776"/>
        <dbReference type="ChEBI" id="CHEBI:62877"/>
        <dbReference type="EC" id="4.1.2.4"/>
    </reaction>
</comment>
<comment type="pathway">
    <text evidence="1">Carbohydrate degradation; 2-deoxy-D-ribose 1-phosphate degradation; D-glyceraldehyde 3-phosphate and acetaldehyde from 2-deoxy-alpha-D-ribose 1-phosphate: step 2/2.</text>
</comment>
<comment type="subcellular location">
    <subcellularLocation>
        <location evidence="1">Cytoplasm</location>
    </subcellularLocation>
</comment>
<comment type="similarity">
    <text evidence="1">Belongs to the DeoC/FbaB aldolase family. DeoC type 1 subfamily.</text>
</comment>
<proteinExistence type="inferred from homology"/>
<gene>
    <name evidence="1" type="primary">deoC</name>
    <name type="ordered locus">SpyM3_1611</name>
</gene>
<accession>P0DA62</accession>
<accession>P63931</accession>
<accession>Q8NZG9</accession>
<sequence>MEVKDILKTVDHTLLATTATWPEIQTILDDAMAYETASACIPASYVKKAAEYVSGKLAICTVIGFPNGYSTTAAKVFECQDAIQNGADEIDMVINLTDVKNGDFDTVEEEIRQIKAKCQDHILKVIVETCQLTKEELIELCGVVTRSGADFIKTSTGFSTAGATFEDVEVMAKYVGEGVKIKAAGGISSLEDAKTFIALGASRLGTSRIIKIVKNEATKPDSY</sequence>
<dbReference type="EC" id="4.1.2.4" evidence="1"/>
<dbReference type="EMBL" id="AE014074">
    <property type="protein sequence ID" value="AAM80218.1"/>
    <property type="molecule type" value="Genomic_DNA"/>
</dbReference>
<dbReference type="RefSeq" id="WP_011018205.1">
    <property type="nucleotide sequence ID" value="NC_004070.1"/>
</dbReference>
<dbReference type="SMR" id="P0DA62"/>
<dbReference type="KEGG" id="spg:SpyM3_1611"/>
<dbReference type="HOGENOM" id="CLU_053595_0_2_9"/>
<dbReference type="UniPathway" id="UPA00002">
    <property type="reaction ID" value="UER00468"/>
</dbReference>
<dbReference type="Proteomes" id="UP000000564">
    <property type="component" value="Chromosome"/>
</dbReference>
<dbReference type="GO" id="GO:0005737">
    <property type="term" value="C:cytoplasm"/>
    <property type="evidence" value="ECO:0007669"/>
    <property type="project" value="UniProtKB-SubCell"/>
</dbReference>
<dbReference type="GO" id="GO:0004139">
    <property type="term" value="F:deoxyribose-phosphate aldolase activity"/>
    <property type="evidence" value="ECO:0007669"/>
    <property type="project" value="UniProtKB-UniRule"/>
</dbReference>
<dbReference type="GO" id="GO:0006018">
    <property type="term" value="P:2-deoxyribose 1-phosphate catabolic process"/>
    <property type="evidence" value="ECO:0007669"/>
    <property type="project" value="UniProtKB-UniRule"/>
</dbReference>
<dbReference type="GO" id="GO:0016052">
    <property type="term" value="P:carbohydrate catabolic process"/>
    <property type="evidence" value="ECO:0007669"/>
    <property type="project" value="TreeGrafter"/>
</dbReference>
<dbReference type="GO" id="GO:0009264">
    <property type="term" value="P:deoxyribonucleotide catabolic process"/>
    <property type="evidence" value="ECO:0007669"/>
    <property type="project" value="InterPro"/>
</dbReference>
<dbReference type="CDD" id="cd00959">
    <property type="entry name" value="DeoC"/>
    <property type="match status" value="1"/>
</dbReference>
<dbReference type="FunFam" id="3.20.20.70:FF:000044">
    <property type="entry name" value="Deoxyribose-phosphate aldolase"/>
    <property type="match status" value="1"/>
</dbReference>
<dbReference type="Gene3D" id="3.20.20.70">
    <property type="entry name" value="Aldolase class I"/>
    <property type="match status" value="1"/>
</dbReference>
<dbReference type="HAMAP" id="MF_00114">
    <property type="entry name" value="DeoC_type1"/>
    <property type="match status" value="1"/>
</dbReference>
<dbReference type="InterPro" id="IPR013785">
    <property type="entry name" value="Aldolase_TIM"/>
</dbReference>
<dbReference type="InterPro" id="IPR011343">
    <property type="entry name" value="DeoC"/>
</dbReference>
<dbReference type="InterPro" id="IPR002915">
    <property type="entry name" value="DeoC/FbaB/LacD_aldolase"/>
</dbReference>
<dbReference type="InterPro" id="IPR028581">
    <property type="entry name" value="DeoC_typeI"/>
</dbReference>
<dbReference type="NCBIfam" id="TIGR00126">
    <property type="entry name" value="deoC"/>
    <property type="match status" value="1"/>
</dbReference>
<dbReference type="PANTHER" id="PTHR10889">
    <property type="entry name" value="DEOXYRIBOSE-PHOSPHATE ALDOLASE"/>
    <property type="match status" value="1"/>
</dbReference>
<dbReference type="PANTHER" id="PTHR10889:SF1">
    <property type="entry name" value="DEOXYRIBOSE-PHOSPHATE ALDOLASE"/>
    <property type="match status" value="1"/>
</dbReference>
<dbReference type="Pfam" id="PF01791">
    <property type="entry name" value="DeoC"/>
    <property type="match status" value="1"/>
</dbReference>
<dbReference type="PIRSF" id="PIRSF001357">
    <property type="entry name" value="DeoC"/>
    <property type="match status" value="1"/>
</dbReference>
<dbReference type="SMART" id="SM01133">
    <property type="entry name" value="DeoC"/>
    <property type="match status" value="1"/>
</dbReference>
<dbReference type="SUPFAM" id="SSF51569">
    <property type="entry name" value="Aldolase"/>
    <property type="match status" value="1"/>
</dbReference>
<feature type="chain" id="PRO_0000057275" description="Deoxyribose-phosphate aldolase">
    <location>
        <begin position="1"/>
        <end position="223"/>
    </location>
</feature>
<feature type="active site" description="Proton donor/acceptor" evidence="1">
    <location>
        <position position="91"/>
    </location>
</feature>
<feature type="active site" description="Schiff-base intermediate with acetaldehyde" evidence="1">
    <location>
        <position position="153"/>
    </location>
</feature>
<feature type="active site" description="Proton donor/acceptor" evidence="1">
    <location>
        <position position="182"/>
    </location>
</feature>
<keyword id="KW-0963">Cytoplasm</keyword>
<keyword id="KW-0456">Lyase</keyword>
<keyword id="KW-0704">Schiff base</keyword>